<sequence>MNGIPMEHGLLLAAVLFCIGLCGLLIRRNLLFILMSIEIMMNASALAFVVAGSRWAQADGQIMYILVISLAAAEASIGLALLLLLYRRYHTLNVDTVSEMRG</sequence>
<gene>
    <name evidence="1" type="primary">nuoK</name>
    <name type="ordered locus">AHA_1773</name>
</gene>
<keyword id="KW-0997">Cell inner membrane</keyword>
<keyword id="KW-1003">Cell membrane</keyword>
<keyword id="KW-0472">Membrane</keyword>
<keyword id="KW-0520">NAD</keyword>
<keyword id="KW-0874">Quinone</keyword>
<keyword id="KW-1185">Reference proteome</keyword>
<keyword id="KW-1278">Translocase</keyword>
<keyword id="KW-0812">Transmembrane</keyword>
<keyword id="KW-1133">Transmembrane helix</keyword>
<keyword id="KW-0813">Transport</keyword>
<keyword id="KW-0830">Ubiquinone</keyword>
<proteinExistence type="inferred from homology"/>
<name>NUOK_AERHH</name>
<accession>A0KJ58</accession>
<evidence type="ECO:0000255" key="1">
    <source>
        <dbReference type="HAMAP-Rule" id="MF_01456"/>
    </source>
</evidence>
<dbReference type="EC" id="7.1.1.-" evidence="1"/>
<dbReference type="EMBL" id="CP000462">
    <property type="protein sequence ID" value="ABK36856.1"/>
    <property type="molecule type" value="Genomic_DNA"/>
</dbReference>
<dbReference type="RefSeq" id="WP_005299823.1">
    <property type="nucleotide sequence ID" value="NC_008570.1"/>
</dbReference>
<dbReference type="RefSeq" id="YP_856309.1">
    <property type="nucleotide sequence ID" value="NC_008570.1"/>
</dbReference>
<dbReference type="SMR" id="A0KJ58"/>
<dbReference type="STRING" id="380703.AHA_1773"/>
<dbReference type="EnsemblBacteria" id="ABK36856">
    <property type="protein sequence ID" value="ABK36856"/>
    <property type="gene ID" value="AHA_1773"/>
</dbReference>
<dbReference type="GeneID" id="47845905"/>
<dbReference type="KEGG" id="aha:AHA_1773"/>
<dbReference type="PATRIC" id="fig|380703.7.peg.1789"/>
<dbReference type="eggNOG" id="COG0713">
    <property type="taxonomic scope" value="Bacteria"/>
</dbReference>
<dbReference type="HOGENOM" id="CLU_144724_0_1_6"/>
<dbReference type="OrthoDB" id="9801357at2"/>
<dbReference type="PRO" id="PR:A0KJ58"/>
<dbReference type="Proteomes" id="UP000000756">
    <property type="component" value="Chromosome"/>
</dbReference>
<dbReference type="GO" id="GO:0030964">
    <property type="term" value="C:NADH dehydrogenase complex"/>
    <property type="evidence" value="ECO:0007669"/>
    <property type="project" value="TreeGrafter"/>
</dbReference>
<dbReference type="GO" id="GO:0005886">
    <property type="term" value="C:plasma membrane"/>
    <property type="evidence" value="ECO:0007669"/>
    <property type="project" value="UniProtKB-SubCell"/>
</dbReference>
<dbReference type="GO" id="GO:0050136">
    <property type="term" value="F:NADH:ubiquinone reductase (non-electrogenic) activity"/>
    <property type="evidence" value="ECO:0007669"/>
    <property type="project" value="UniProtKB-UniRule"/>
</dbReference>
<dbReference type="GO" id="GO:0048038">
    <property type="term" value="F:quinone binding"/>
    <property type="evidence" value="ECO:0007669"/>
    <property type="project" value="UniProtKB-KW"/>
</dbReference>
<dbReference type="GO" id="GO:0042773">
    <property type="term" value="P:ATP synthesis coupled electron transport"/>
    <property type="evidence" value="ECO:0007669"/>
    <property type="project" value="InterPro"/>
</dbReference>
<dbReference type="FunFam" id="1.10.287.3510:FF:000001">
    <property type="entry name" value="NADH-quinone oxidoreductase subunit K"/>
    <property type="match status" value="1"/>
</dbReference>
<dbReference type="Gene3D" id="1.10.287.3510">
    <property type="match status" value="1"/>
</dbReference>
<dbReference type="HAMAP" id="MF_01456">
    <property type="entry name" value="NDH1_NuoK"/>
    <property type="match status" value="1"/>
</dbReference>
<dbReference type="InterPro" id="IPR001133">
    <property type="entry name" value="NADH_UbQ_OxRdtase_chain4L/K"/>
</dbReference>
<dbReference type="InterPro" id="IPR039428">
    <property type="entry name" value="NUOK/Mnh_C1-like"/>
</dbReference>
<dbReference type="NCBIfam" id="NF004319">
    <property type="entry name" value="PRK05715.1-1"/>
    <property type="match status" value="1"/>
</dbReference>
<dbReference type="NCBIfam" id="NF004320">
    <property type="entry name" value="PRK05715.1-2"/>
    <property type="match status" value="1"/>
</dbReference>
<dbReference type="PANTHER" id="PTHR11434:SF16">
    <property type="entry name" value="NADH-UBIQUINONE OXIDOREDUCTASE CHAIN 4L"/>
    <property type="match status" value="1"/>
</dbReference>
<dbReference type="PANTHER" id="PTHR11434">
    <property type="entry name" value="NADH-UBIQUINONE OXIDOREDUCTASE SUBUNIT ND4L"/>
    <property type="match status" value="1"/>
</dbReference>
<dbReference type="Pfam" id="PF00420">
    <property type="entry name" value="Oxidored_q2"/>
    <property type="match status" value="1"/>
</dbReference>
<comment type="function">
    <text evidence="1">NDH-1 shuttles electrons from NADH, via FMN and iron-sulfur (Fe-S) centers, to quinones in the respiratory chain. The immediate electron acceptor for the enzyme in this species is believed to be ubiquinone. Couples the redox reaction to proton translocation (for every two electrons transferred, four hydrogen ions are translocated across the cytoplasmic membrane), and thus conserves the redox energy in a proton gradient.</text>
</comment>
<comment type="catalytic activity">
    <reaction evidence="1">
        <text>a quinone + NADH + 5 H(+)(in) = a quinol + NAD(+) + 4 H(+)(out)</text>
        <dbReference type="Rhea" id="RHEA:57888"/>
        <dbReference type="ChEBI" id="CHEBI:15378"/>
        <dbReference type="ChEBI" id="CHEBI:24646"/>
        <dbReference type="ChEBI" id="CHEBI:57540"/>
        <dbReference type="ChEBI" id="CHEBI:57945"/>
        <dbReference type="ChEBI" id="CHEBI:132124"/>
    </reaction>
</comment>
<comment type="subunit">
    <text evidence="1">NDH-1 is composed of 14 different subunits. Subunits NuoA, H, J, K, L, M, N constitute the membrane sector of the complex.</text>
</comment>
<comment type="subcellular location">
    <subcellularLocation>
        <location evidence="1">Cell inner membrane</location>
        <topology evidence="1">Multi-pass membrane protein</topology>
    </subcellularLocation>
</comment>
<comment type="similarity">
    <text evidence="1">Belongs to the complex I subunit 4L family.</text>
</comment>
<feature type="chain" id="PRO_0000389920" description="NADH-quinone oxidoreductase subunit K">
    <location>
        <begin position="1"/>
        <end position="102"/>
    </location>
</feature>
<feature type="transmembrane region" description="Helical" evidence="1">
    <location>
        <begin position="6"/>
        <end position="26"/>
    </location>
</feature>
<feature type="transmembrane region" description="Helical" evidence="1">
    <location>
        <begin position="30"/>
        <end position="50"/>
    </location>
</feature>
<feature type="transmembrane region" description="Helical" evidence="1">
    <location>
        <begin position="65"/>
        <end position="85"/>
    </location>
</feature>
<protein>
    <recommendedName>
        <fullName evidence="1">NADH-quinone oxidoreductase subunit K</fullName>
        <ecNumber evidence="1">7.1.1.-</ecNumber>
    </recommendedName>
    <alternativeName>
        <fullName evidence="1">NADH dehydrogenase I subunit K</fullName>
    </alternativeName>
    <alternativeName>
        <fullName evidence="1">NDH-1 subunit K</fullName>
    </alternativeName>
</protein>
<reference key="1">
    <citation type="journal article" date="2006" name="J. Bacteriol.">
        <title>Genome sequence of Aeromonas hydrophila ATCC 7966T: jack of all trades.</title>
        <authorList>
            <person name="Seshadri R."/>
            <person name="Joseph S.W."/>
            <person name="Chopra A.K."/>
            <person name="Sha J."/>
            <person name="Shaw J."/>
            <person name="Graf J."/>
            <person name="Haft D.H."/>
            <person name="Wu M."/>
            <person name="Ren Q."/>
            <person name="Rosovitz M.J."/>
            <person name="Madupu R."/>
            <person name="Tallon L."/>
            <person name="Kim M."/>
            <person name="Jin S."/>
            <person name="Vuong H."/>
            <person name="Stine O.C."/>
            <person name="Ali A."/>
            <person name="Horneman A.J."/>
            <person name="Heidelberg J.F."/>
        </authorList>
    </citation>
    <scope>NUCLEOTIDE SEQUENCE [LARGE SCALE GENOMIC DNA]</scope>
    <source>
        <strain>ATCC 7966 / DSM 30187 / BCRC 13018 / CCUG 14551 / JCM 1027 / KCTC 2358 / NCIMB 9240 / NCTC 8049</strain>
    </source>
</reference>
<organism>
    <name type="scientific">Aeromonas hydrophila subsp. hydrophila (strain ATCC 7966 / DSM 30187 / BCRC 13018 / CCUG 14551 / JCM 1027 / KCTC 2358 / NCIMB 9240 / NCTC 8049)</name>
    <dbReference type="NCBI Taxonomy" id="380703"/>
    <lineage>
        <taxon>Bacteria</taxon>
        <taxon>Pseudomonadati</taxon>
        <taxon>Pseudomonadota</taxon>
        <taxon>Gammaproteobacteria</taxon>
        <taxon>Aeromonadales</taxon>
        <taxon>Aeromonadaceae</taxon>
        <taxon>Aeromonas</taxon>
    </lineage>
</organism>